<sequence>MKKLLIVSVKAYQKYISPLSPPSCRYKPTCSAYMLTAIEKHGTKGILMGIARILRCHPFVAGGVDPVPEDFSLMRNKNTSKNAEKA</sequence>
<organism>
    <name type="scientific">Streptococcus pyogenes serotype M6 (strain ATCC BAA-946 / MGAS10394)</name>
    <dbReference type="NCBI Taxonomy" id="286636"/>
    <lineage>
        <taxon>Bacteria</taxon>
        <taxon>Bacillati</taxon>
        <taxon>Bacillota</taxon>
        <taxon>Bacilli</taxon>
        <taxon>Lactobacillales</taxon>
        <taxon>Streptococcaceae</taxon>
        <taxon>Streptococcus</taxon>
    </lineage>
</organism>
<name>YIDD_STRP6</name>
<feature type="chain" id="PRO_0000171885" description="Putative membrane protein insertion efficiency factor">
    <location>
        <begin position="1"/>
        <end position="86"/>
    </location>
</feature>
<evidence type="ECO:0000255" key="1">
    <source>
        <dbReference type="HAMAP-Rule" id="MF_00386"/>
    </source>
</evidence>
<evidence type="ECO:0000305" key="2"/>
<dbReference type="EMBL" id="CP000003">
    <property type="protein sequence ID" value="AAT86472.1"/>
    <property type="status" value="ALT_INIT"/>
    <property type="molecule type" value="Genomic_DNA"/>
</dbReference>
<dbReference type="KEGG" id="spa:M6_Spy0337"/>
<dbReference type="HOGENOM" id="CLU_144811_5_2_9"/>
<dbReference type="Proteomes" id="UP000001167">
    <property type="component" value="Chromosome"/>
</dbReference>
<dbReference type="GO" id="GO:0005886">
    <property type="term" value="C:plasma membrane"/>
    <property type="evidence" value="ECO:0007669"/>
    <property type="project" value="UniProtKB-SubCell"/>
</dbReference>
<dbReference type="HAMAP" id="MF_00386">
    <property type="entry name" value="UPF0161_YidD"/>
    <property type="match status" value="1"/>
</dbReference>
<dbReference type="InterPro" id="IPR002696">
    <property type="entry name" value="Membr_insert_effic_factor_YidD"/>
</dbReference>
<dbReference type="NCBIfam" id="TIGR00278">
    <property type="entry name" value="membrane protein insertion efficiency factor YidD"/>
    <property type="match status" value="1"/>
</dbReference>
<dbReference type="PANTHER" id="PTHR33383">
    <property type="entry name" value="MEMBRANE PROTEIN INSERTION EFFICIENCY FACTOR-RELATED"/>
    <property type="match status" value="1"/>
</dbReference>
<dbReference type="PANTHER" id="PTHR33383:SF1">
    <property type="entry name" value="MEMBRANE PROTEIN INSERTION EFFICIENCY FACTOR-RELATED"/>
    <property type="match status" value="1"/>
</dbReference>
<dbReference type="Pfam" id="PF01809">
    <property type="entry name" value="YidD"/>
    <property type="match status" value="1"/>
</dbReference>
<dbReference type="SMART" id="SM01234">
    <property type="entry name" value="Haemolytic"/>
    <property type="match status" value="1"/>
</dbReference>
<gene>
    <name type="ordered locus">M6_Spy0337</name>
</gene>
<proteinExistence type="inferred from homology"/>
<comment type="function">
    <text evidence="1">Could be involved in insertion of integral membrane proteins into the membrane.</text>
</comment>
<comment type="subcellular location">
    <subcellularLocation>
        <location evidence="1">Cell membrane</location>
        <topology evidence="1">Peripheral membrane protein</topology>
        <orientation evidence="1">Cytoplasmic side</orientation>
    </subcellularLocation>
</comment>
<comment type="similarity">
    <text evidence="1">Belongs to the UPF0161 family.</text>
</comment>
<comment type="sequence caution" evidence="2">
    <conflict type="erroneous initiation">
        <sequence resource="EMBL-CDS" id="AAT86472"/>
    </conflict>
</comment>
<accession>Q5XDP1</accession>
<reference key="1">
    <citation type="journal article" date="2004" name="J. Infect. Dis.">
        <title>Progress toward characterization of the group A Streptococcus metagenome: complete genome sequence of a macrolide-resistant serotype M6 strain.</title>
        <authorList>
            <person name="Banks D.J."/>
            <person name="Porcella S.F."/>
            <person name="Barbian K.D."/>
            <person name="Beres S.B."/>
            <person name="Philips L.E."/>
            <person name="Voyich J.M."/>
            <person name="DeLeo F.R."/>
            <person name="Martin J.M."/>
            <person name="Somerville G.A."/>
            <person name="Musser J.M."/>
        </authorList>
    </citation>
    <scope>NUCLEOTIDE SEQUENCE [LARGE SCALE GENOMIC DNA]</scope>
    <source>
        <strain>ATCC BAA-946 / MGAS10394</strain>
    </source>
</reference>
<keyword id="KW-1003">Cell membrane</keyword>
<keyword id="KW-0472">Membrane</keyword>
<protein>
    <recommendedName>
        <fullName evidence="1">Putative membrane protein insertion efficiency factor</fullName>
    </recommendedName>
</protein>